<gene>
    <name evidence="8" type="primary">slx4</name>
    <name type="ORF">SPAC688.06c</name>
</gene>
<accession>Q9P6M0</accession>
<comment type="function">
    <text evidence="3 4">Regulatory subunit of the slx1-slx4 structure-specific endonuclease that resolves DNA secondary structures generated during DNA repair and recombination. Has endonuclease activity towards branched DNA substrates, introducing single-strand cuts in duplex DNA close to junctions with ss-DNA. Has a preference for stem-loop (SL) and splayed arm Y structures. Introduces a single-strand cut in duplex DNA on the 3' side of a double-strand/single-strand junction with respect to the single-strand moving 3' to 5' away from the junction. Plays a critical role in maintaining the integrity of the ribosomal DNA (rDNA) loci, where it has a role in re-starting stalled replication forks. The complex initiates homologous recombination (HR) events, used to maintain rDNA copy number, in the rDNA repeats that are processed by a mechanism that requires rad22, but not rhp51. Has Holliday junction resolvase activity in vitro. Slx4 is required for efficient processing of DNA substrates.</text>
</comment>
<comment type="subunit">
    <text>Forms a heterodimer with slx1.</text>
</comment>
<comment type="subcellular location">
    <subcellularLocation>
        <location evidence="3 4 5">Nucleus</location>
        <location evidence="3 4 5">Nucleolus</location>
    </subcellularLocation>
    <text evidence="3 4 5">Associates with chromatin at rDNA repeat protrusions.</text>
</comment>
<comment type="PTM">
    <text evidence="1">Phosphorylated in response to DNA damage.</text>
</comment>
<comment type="miscellaneous">
    <text evidence="3">Simultaneous elimination of slx4 and rqh1 is lethal.</text>
</comment>
<comment type="similarity">
    <text evidence="7">Belongs to the SLX4 family.</text>
</comment>
<organism>
    <name type="scientific">Schizosaccharomyces pombe (strain 972 / ATCC 24843)</name>
    <name type="common">Fission yeast</name>
    <dbReference type="NCBI Taxonomy" id="284812"/>
    <lineage>
        <taxon>Eukaryota</taxon>
        <taxon>Fungi</taxon>
        <taxon>Dikarya</taxon>
        <taxon>Ascomycota</taxon>
        <taxon>Taphrinomycotina</taxon>
        <taxon>Schizosaccharomycetes</taxon>
        <taxon>Schizosaccharomycetales</taxon>
        <taxon>Schizosaccharomycetaceae</taxon>
        <taxon>Schizosaccharomyces</taxon>
    </lineage>
</organism>
<reference evidence="8" key="1">
    <citation type="journal article" date="2002" name="Nature">
        <title>The genome sequence of Schizosaccharomyces pombe.</title>
        <authorList>
            <person name="Wood V."/>
            <person name="Gwilliam R."/>
            <person name="Rajandream M.A."/>
            <person name="Lyne M.H."/>
            <person name="Lyne R."/>
            <person name="Stewart A."/>
            <person name="Sgouros J.G."/>
            <person name="Peat N."/>
            <person name="Hayles J."/>
            <person name="Baker S.G."/>
            <person name="Basham D."/>
            <person name="Bowman S."/>
            <person name="Brooks K."/>
            <person name="Brown D."/>
            <person name="Brown S."/>
            <person name="Chillingworth T."/>
            <person name="Churcher C.M."/>
            <person name="Collins M."/>
            <person name="Connor R."/>
            <person name="Cronin A."/>
            <person name="Davis P."/>
            <person name="Feltwell T."/>
            <person name="Fraser A."/>
            <person name="Gentles S."/>
            <person name="Goble A."/>
            <person name="Hamlin N."/>
            <person name="Harris D.E."/>
            <person name="Hidalgo J."/>
            <person name="Hodgson G."/>
            <person name="Holroyd S."/>
            <person name="Hornsby T."/>
            <person name="Howarth S."/>
            <person name="Huckle E.J."/>
            <person name="Hunt S."/>
            <person name="Jagels K."/>
            <person name="James K.D."/>
            <person name="Jones L."/>
            <person name="Jones M."/>
            <person name="Leather S."/>
            <person name="McDonald S."/>
            <person name="McLean J."/>
            <person name="Mooney P."/>
            <person name="Moule S."/>
            <person name="Mungall K.L."/>
            <person name="Murphy L.D."/>
            <person name="Niblett D."/>
            <person name="Odell C."/>
            <person name="Oliver K."/>
            <person name="O'Neil S."/>
            <person name="Pearson D."/>
            <person name="Quail M.A."/>
            <person name="Rabbinowitsch E."/>
            <person name="Rutherford K.M."/>
            <person name="Rutter S."/>
            <person name="Saunders D."/>
            <person name="Seeger K."/>
            <person name="Sharp S."/>
            <person name="Skelton J."/>
            <person name="Simmonds M.N."/>
            <person name="Squares R."/>
            <person name="Squares S."/>
            <person name="Stevens K."/>
            <person name="Taylor K."/>
            <person name="Taylor R.G."/>
            <person name="Tivey A."/>
            <person name="Walsh S.V."/>
            <person name="Warren T."/>
            <person name="Whitehead S."/>
            <person name="Woodward J.R."/>
            <person name="Volckaert G."/>
            <person name="Aert R."/>
            <person name="Robben J."/>
            <person name="Grymonprez B."/>
            <person name="Weltjens I."/>
            <person name="Vanstreels E."/>
            <person name="Rieger M."/>
            <person name="Schaefer M."/>
            <person name="Mueller-Auer S."/>
            <person name="Gabel C."/>
            <person name="Fuchs M."/>
            <person name="Duesterhoeft A."/>
            <person name="Fritzc C."/>
            <person name="Holzer E."/>
            <person name="Moestl D."/>
            <person name="Hilbert H."/>
            <person name="Borzym K."/>
            <person name="Langer I."/>
            <person name="Beck A."/>
            <person name="Lehrach H."/>
            <person name="Reinhardt R."/>
            <person name="Pohl T.M."/>
            <person name="Eger P."/>
            <person name="Zimmermann W."/>
            <person name="Wedler H."/>
            <person name="Wambutt R."/>
            <person name="Purnelle B."/>
            <person name="Goffeau A."/>
            <person name="Cadieu E."/>
            <person name="Dreano S."/>
            <person name="Gloux S."/>
            <person name="Lelaure V."/>
            <person name="Mottier S."/>
            <person name="Galibert F."/>
            <person name="Aves S.J."/>
            <person name="Xiang Z."/>
            <person name="Hunt C."/>
            <person name="Moore K."/>
            <person name="Hurst S.M."/>
            <person name="Lucas M."/>
            <person name="Rochet M."/>
            <person name="Gaillardin C."/>
            <person name="Tallada V.A."/>
            <person name="Garzon A."/>
            <person name="Thode G."/>
            <person name="Daga R.R."/>
            <person name="Cruzado L."/>
            <person name="Jimenez J."/>
            <person name="Sanchez M."/>
            <person name="del Rey F."/>
            <person name="Benito J."/>
            <person name="Dominguez A."/>
            <person name="Revuelta J.L."/>
            <person name="Moreno S."/>
            <person name="Armstrong J."/>
            <person name="Forsburg S.L."/>
            <person name="Cerutti L."/>
            <person name="Lowe T."/>
            <person name="McCombie W.R."/>
            <person name="Paulsen I."/>
            <person name="Potashkin J."/>
            <person name="Shpakovski G.V."/>
            <person name="Ussery D."/>
            <person name="Barrell B.G."/>
            <person name="Nurse P."/>
        </authorList>
    </citation>
    <scope>NUCLEOTIDE SEQUENCE [LARGE SCALE GENOMIC DNA]</scope>
    <source>
        <strain>972 / ATCC 24843</strain>
    </source>
</reference>
<reference evidence="7" key="2">
    <citation type="journal article" date="2004" name="Mol. Biol. Cell">
        <title>Slx1-Slx4 are subunits of a structure-specific endonuclease that maintains ribosomal DNA in fission yeast.</title>
        <authorList>
            <person name="Coulon S."/>
            <person name="Gaillard P.-H.L."/>
            <person name="Chahwan C."/>
            <person name="McDonald W.H."/>
            <person name="Yates J.R. III"/>
            <person name="Russell P."/>
        </authorList>
    </citation>
    <scope>PROTEIN SEQUENCE OF 116-126; 313-323 AND 345-358</scope>
    <scope>FUNCTION</scope>
    <scope>ENZYMATIC ACTIVITY OF THE SLX1-SLX4 COMPLEX</scope>
    <scope>INTERACTION WITH SLX1</scope>
    <scope>SUBCELLULAR LOCATION</scope>
    <scope>DELETION MUTANT</scope>
    <scope>IDENTIFICATION BY MASS SPECTROMETRY</scope>
</reference>
<reference evidence="7" key="3">
    <citation type="journal article" date="2006" name="Mol. Biol. Cell">
        <title>Rad22Rad52-dependent repair of ribosomal DNA repeats cleaved by Slx1-Slx4 endonuclease.</title>
        <authorList>
            <person name="Coulon S."/>
            <person name="Noguchi E."/>
            <person name="Noguchi C."/>
            <person name="Du L.-L."/>
            <person name="Nakamura T.M."/>
            <person name="Russell P."/>
        </authorList>
    </citation>
    <scope>FUNCTION</scope>
    <scope>INTERACTION WITH SLX1</scope>
    <scope>SUBCELLULAR LOCATION</scope>
</reference>
<reference evidence="7" key="4">
    <citation type="journal article" date="2006" name="Nat. Biotechnol.">
        <title>ORFeome cloning and global analysis of protein localization in the fission yeast Schizosaccharomyces pombe.</title>
        <authorList>
            <person name="Matsuyama A."/>
            <person name="Arai R."/>
            <person name="Yashiroda Y."/>
            <person name="Shirai A."/>
            <person name="Kamata A."/>
            <person name="Sekido S."/>
            <person name="Kobayashi Y."/>
            <person name="Hashimoto A."/>
            <person name="Hamamoto M."/>
            <person name="Hiraoka Y."/>
            <person name="Horinouchi S."/>
            <person name="Yoshida M."/>
        </authorList>
    </citation>
    <scope>SUBCELLULAR LOCATION [LARGE SCALE ANALYSIS]</scope>
</reference>
<feature type="chain" id="PRO_0000349134" description="Structure-specific endonuclease subunit slx4">
    <location>
        <begin position="1"/>
        <end position="419"/>
    </location>
</feature>
<feature type="helix" evidence="9">
    <location>
        <begin position="352"/>
        <end position="366"/>
    </location>
</feature>
<feature type="helix" evidence="9">
    <location>
        <begin position="371"/>
        <end position="377"/>
    </location>
</feature>
<feature type="helix" evidence="9">
    <location>
        <begin position="384"/>
        <end position="393"/>
    </location>
</feature>
<feature type="helix" evidence="9">
    <location>
        <begin position="400"/>
        <end position="410"/>
    </location>
</feature>
<name>SLX4_SCHPO</name>
<keyword id="KW-0002">3D-structure</keyword>
<keyword id="KW-0903">Direct protein sequencing</keyword>
<keyword id="KW-0227">DNA damage</keyword>
<keyword id="KW-0233">DNA recombination</keyword>
<keyword id="KW-0234">DNA repair</keyword>
<keyword id="KW-0539">Nucleus</keyword>
<keyword id="KW-0597">Phosphoprotein</keyword>
<keyword id="KW-1185">Reference proteome</keyword>
<evidence type="ECO:0000250" key="1"/>
<evidence type="ECO:0000250" key="2">
    <source>
        <dbReference type="UniProtKB" id="Q12098"/>
    </source>
</evidence>
<evidence type="ECO:0000269" key="3">
    <source>
    </source>
</evidence>
<evidence type="ECO:0000269" key="4">
    <source>
    </source>
</evidence>
<evidence type="ECO:0000269" key="5">
    <source>
    </source>
</evidence>
<evidence type="ECO:0000303" key="6">
    <source>
    </source>
</evidence>
<evidence type="ECO:0000305" key="7"/>
<evidence type="ECO:0000312" key="8">
    <source>
        <dbReference type="EMBL" id="CAB90772.1"/>
    </source>
</evidence>
<evidence type="ECO:0007829" key="9">
    <source>
        <dbReference type="PDB" id="4ZDT"/>
    </source>
</evidence>
<sequence>MSAEEYIEVSSSPDIFTDDDDMITIEPELNKNPKDCNSKRKRSVTECCEIRLITSKCDFESTQQLVHHNCTGHKVHEHNLNAVDEEDFDTENLPLLFSSFSDNESDILEPDLNTRVAEDNDVLLSRYSKIKNSASCRNTFEHSAYHSNREEISSSGFYYHRKPQLFEKSLEKLGNKSIEANRSPLIKELCESANSTENVCFSVSTVDEIQQRHPSAGHSIDSTCQSNSFLEGDSATHKKKKTDNIKEFTSCEFNDRSRTLLNYAGYMDTNKNADNEAKSLKEKLENFPVEKLRAIAESYGFKSSDSKATLIKIVESCLDAIDSRSQSKKLGKETPHDYLITSTKTVLEFDDIVTQTHRAISQVVKQAKDNSVWIKILTYSAIDVEEFQLWLKRKNLNVSLDLIKSWCDKYGVLMKGSWH</sequence>
<protein>
    <recommendedName>
        <fullName evidence="6 8">Structure-specific endonuclease subunit slx4</fullName>
    </recommendedName>
    <alternativeName>
        <fullName evidence="2">Synthetic lethal of unknown function protein 4</fullName>
    </alternativeName>
</protein>
<dbReference type="EMBL" id="CU329670">
    <property type="protein sequence ID" value="CAB90772.1"/>
    <property type="molecule type" value="Genomic_DNA"/>
</dbReference>
<dbReference type="RefSeq" id="NP_594064.1">
    <property type="nucleotide sequence ID" value="NM_001019488.2"/>
</dbReference>
<dbReference type="PDB" id="4ZDT">
    <property type="method" value="X-ray"/>
    <property type="resolution" value="2.00 A"/>
    <property type="chains" value="B/D=352-419"/>
</dbReference>
<dbReference type="PDBsum" id="4ZDT"/>
<dbReference type="SMR" id="Q9P6M0"/>
<dbReference type="BioGRID" id="279898">
    <property type="interactions" value="134"/>
</dbReference>
<dbReference type="STRING" id="284812.Q9P6M0"/>
<dbReference type="iPTMnet" id="Q9P6M0"/>
<dbReference type="PaxDb" id="4896-SPAC688.06c.1"/>
<dbReference type="EnsemblFungi" id="SPAC688.06c.1">
    <property type="protein sequence ID" value="SPAC688.06c.1:pep"/>
    <property type="gene ID" value="SPAC688.06c"/>
</dbReference>
<dbReference type="GeneID" id="2543478"/>
<dbReference type="KEGG" id="spo:2543478"/>
<dbReference type="PomBase" id="SPAC688.06c">
    <property type="gene designation" value="slx4"/>
</dbReference>
<dbReference type="VEuPathDB" id="FungiDB:SPAC688.06c"/>
<dbReference type="HOGENOM" id="CLU_655797_0_0_1"/>
<dbReference type="InParanoid" id="Q9P6M0"/>
<dbReference type="EvolutionaryTrace" id="Q9P6M0"/>
<dbReference type="PRO" id="PR:Q9P6M0"/>
<dbReference type="Proteomes" id="UP000002485">
    <property type="component" value="Chromosome I"/>
</dbReference>
<dbReference type="GO" id="GO:0005634">
    <property type="term" value="C:nucleus"/>
    <property type="evidence" value="ECO:0007005"/>
    <property type="project" value="PomBase"/>
</dbReference>
<dbReference type="GO" id="GO:0030875">
    <property type="term" value="C:rDNA protrusion"/>
    <property type="evidence" value="ECO:0000353"/>
    <property type="project" value="PomBase"/>
</dbReference>
<dbReference type="GO" id="GO:0033557">
    <property type="term" value="C:Slx1-Slx4 complex"/>
    <property type="evidence" value="ECO:0000314"/>
    <property type="project" value="PomBase"/>
</dbReference>
<dbReference type="GO" id="GO:0000727">
    <property type="term" value="P:double-strand break repair via break-induced replication"/>
    <property type="evidence" value="ECO:0000266"/>
    <property type="project" value="PomBase"/>
</dbReference>
<dbReference type="GO" id="GO:0043007">
    <property type="term" value="P:maintenance of rDNA"/>
    <property type="evidence" value="ECO:0000316"/>
    <property type="project" value="PomBase"/>
</dbReference>
<dbReference type="GO" id="GO:0033260">
    <property type="term" value="P:nuclear DNA replication"/>
    <property type="evidence" value="ECO:0000266"/>
    <property type="project" value="PomBase"/>
</dbReference>
<dbReference type="GO" id="GO:0031297">
    <property type="term" value="P:replication fork processing"/>
    <property type="evidence" value="ECO:0000304"/>
    <property type="project" value="PomBase"/>
</dbReference>
<dbReference type="InterPro" id="IPR018574">
    <property type="entry name" value="Structure-sp_endonuc_su_Slx4"/>
</dbReference>
<dbReference type="Pfam" id="PF09494">
    <property type="entry name" value="Slx4"/>
    <property type="match status" value="1"/>
</dbReference>
<proteinExistence type="evidence at protein level"/>